<dbReference type="EC" id="2.1.2.10" evidence="1"/>
<dbReference type="EMBL" id="CP001472">
    <property type="protein sequence ID" value="ACO32607.1"/>
    <property type="molecule type" value="Genomic_DNA"/>
</dbReference>
<dbReference type="RefSeq" id="WP_015897197.1">
    <property type="nucleotide sequence ID" value="NC_012483.1"/>
</dbReference>
<dbReference type="SMR" id="C1F933"/>
<dbReference type="FunCoup" id="C1F933">
    <property type="interactions" value="516"/>
</dbReference>
<dbReference type="STRING" id="240015.ACP_2096"/>
<dbReference type="KEGG" id="aca:ACP_2096"/>
<dbReference type="eggNOG" id="COG0404">
    <property type="taxonomic scope" value="Bacteria"/>
</dbReference>
<dbReference type="HOGENOM" id="CLU_007884_10_2_0"/>
<dbReference type="InParanoid" id="C1F933"/>
<dbReference type="OrthoDB" id="9774591at2"/>
<dbReference type="Proteomes" id="UP000002207">
    <property type="component" value="Chromosome"/>
</dbReference>
<dbReference type="GO" id="GO:0005829">
    <property type="term" value="C:cytosol"/>
    <property type="evidence" value="ECO:0007669"/>
    <property type="project" value="TreeGrafter"/>
</dbReference>
<dbReference type="GO" id="GO:0005960">
    <property type="term" value="C:glycine cleavage complex"/>
    <property type="evidence" value="ECO:0007669"/>
    <property type="project" value="InterPro"/>
</dbReference>
<dbReference type="GO" id="GO:0004047">
    <property type="term" value="F:aminomethyltransferase activity"/>
    <property type="evidence" value="ECO:0007669"/>
    <property type="project" value="UniProtKB-UniRule"/>
</dbReference>
<dbReference type="GO" id="GO:0008483">
    <property type="term" value="F:transaminase activity"/>
    <property type="evidence" value="ECO:0007669"/>
    <property type="project" value="UniProtKB-KW"/>
</dbReference>
<dbReference type="GO" id="GO:0019464">
    <property type="term" value="P:glycine decarboxylation via glycine cleavage system"/>
    <property type="evidence" value="ECO:0007669"/>
    <property type="project" value="UniProtKB-UniRule"/>
</dbReference>
<dbReference type="FunFam" id="2.40.30.110:FF:000003">
    <property type="entry name" value="Aminomethyltransferase"/>
    <property type="match status" value="1"/>
</dbReference>
<dbReference type="FunFam" id="3.30.70.1400:FF:000001">
    <property type="entry name" value="Aminomethyltransferase"/>
    <property type="match status" value="1"/>
</dbReference>
<dbReference type="Gene3D" id="2.40.30.110">
    <property type="entry name" value="Aminomethyltransferase beta-barrel domains"/>
    <property type="match status" value="1"/>
</dbReference>
<dbReference type="Gene3D" id="3.30.70.1400">
    <property type="entry name" value="Aminomethyltransferase beta-barrel domains"/>
    <property type="match status" value="1"/>
</dbReference>
<dbReference type="Gene3D" id="4.10.1250.10">
    <property type="entry name" value="Aminomethyltransferase fragment"/>
    <property type="match status" value="1"/>
</dbReference>
<dbReference type="Gene3D" id="3.30.1360.120">
    <property type="entry name" value="Probable tRNA modification gtpase trme, domain 1"/>
    <property type="match status" value="1"/>
</dbReference>
<dbReference type="HAMAP" id="MF_00259">
    <property type="entry name" value="GcvT"/>
    <property type="match status" value="1"/>
</dbReference>
<dbReference type="InterPro" id="IPR006223">
    <property type="entry name" value="GCS_T"/>
</dbReference>
<dbReference type="InterPro" id="IPR022903">
    <property type="entry name" value="GCS_T_bac"/>
</dbReference>
<dbReference type="InterPro" id="IPR013977">
    <property type="entry name" value="GCST_C"/>
</dbReference>
<dbReference type="InterPro" id="IPR006222">
    <property type="entry name" value="GCV_T_N"/>
</dbReference>
<dbReference type="InterPro" id="IPR028896">
    <property type="entry name" value="GcvT/YgfZ/DmdA"/>
</dbReference>
<dbReference type="InterPro" id="IPR029043">
    <property type="entry name" value="GcvT/YgfZ_C"/>
</dbReference>
<dbReference type="InterPro" id="IPR027266">
    <property type="entry name" value="TrmE/GcvT_dom1"/>
</dbReference>
<dbReference type="NCBIfam" id="TIGR00528">
    <property type="entry name" value="gcvT"/>
    <property type="match status" value="1"/>
</dbReference>
<dbReference type="NCBIfam" id="NF001567">
    <property type="entry name" value="PRK00389.1"/>
    <property type="match status" value="1"/>
</dbReference>
<dbReference type="PANTHER" id="PTHR43757">
    <property type="entry name" value="AMINOMETHYLTRANSFERASE"/>
    <property type="match status" value="1"/>
</dbReference>
<dbReference type="PANTHER" id="PTHR43757:SF2">
    <property type="entry name" value="AMINOMETHYLTRANSFERASE, MITOCHONDRIAL"/>
    <property type="match status" value="1"/>
</dbReference>
<dbReference type="Pfam" id="PF01571">
    <property type="entry name" value="GCV_T"/>
    <property type="match status" value="1"/>
</dbReference>
<dbReference type="Pfam" id="PF08669">
    <property type="entry name" value="GCV_T_C"/>
    <property type="match status" value="1"/>
</dbReference>
<dbReference type="PIRSF" id="PIRSF006487">
    <property type="entry name" value="GcvT"/>
    <property type="match status" value="1"/>
</dbReference>
<dbReference type="SUPFAM" id="SSF101790">
    <property type="entry name" value="Aminomethyltransferase beta-barrel domain"/>
    <property type="match status" value="1"/>
</dbReference>
<dbReference type="SUPFAM" id="SSF103025">
    <property type="entry name" value="Folate-binding domain"/>
    <property type="match status" value="1"/>
</dbReference>
<gene>
    <name evidence="1" type="primary">gcvT</name>
    <name type="ordered locus">ACP_2096</name>
</gene>
<accession>C1F933</accession>
<sequence length="378" mass="41700">MSTSAPAALRKTALNAVHRRLGAKMVDFGGWDMPVEYSGLIAEHMAVRTGVGLFDVSHMGDIQLRGPGSLDAVQHICMNDASKLAVGQAHYSAMLYPQGTFVDDVIVHKFSDNDYLIVINAGTREKDYEWIRSHAQPFHCHVSNYSDLYTQLAIQGPRAAETLAKLTSVDLAAIKNYRFTWGTVCNLHNTLIARTGYTGEDGFEIYIPSDEATSERVWNEVLEAGKEFGIVPCGLGARNTLRLESAMALYGHEISQDIDVFEAGLDRYCKLDKGTFVGSEALKQVVAQGGPKRKLVGLEMIDRGIARDGYRVLNDTQQAVGYVTSGSPAPFLKKNIALAYVPTELATLDREVFVEIRNNPVKARIVPTPFYRRPKKQA</sequence>
<feature type="chain" id="PRO_1000125628" description="Aminomethyltransferase">
    <location>
        <begin position="1"/>
        <end position="378"/>
    </location>
</feature>
<protein>
    <recommendedName>
        <fullName evidence="1">Aminomethyltransferase</fullName>
        <ecNumber evidence="1">2.1.2.10</ecNumber>
    </recommendedName>
    <alternativeName>
        <fullName evidence="1">Glycine cleavage system T protein</fullName>
    </alternativeName>
</protein>
<name>GCST_ACIC5</name>
<reference key="1">
    <citation type="journal article" date="2009" name="Appl. Environ. Microbiol.">
        <title>Three genomes from the phylum Acidobacteria provide insight into the lifestyles of these microorganisms in soils.</title>
        <authorList>
            <person name="Ward N.L."/>
            <person name="Challacombe J.F."/>
            <person name="Janssen P.H."/>
            <person name="Henrissat B."/>
            <person name="Coutinho P.M."/>
            <person name="Wu M."/>
            <person name="Xie G."/>
            <person name="Haft D.H."/>
            <person name="Sait M."/>
            <person name="Badger J."/>
            <person name="Barabote R.D."/>
            <person name="Bradley B."/>
            <person name="Brettin T.S."/>
            <person name="Brinkac L.M."/>
            <person name="Bruce D."/>
            <person name="Creasy T."/>
            <person name="Daugherty S.C."/>
            <person name="Davidsen T.M."/>
            <person name="DeBoy R.T."/>
            <person name="Detter J.C."/>
            <person name="Dodson R.J."/>
            <person name="Durkin A.S."/>
            <person name="Ganapathy A."/>
            <person name="Gwinn-Giglio M."/>
            <person name="Han C.S."/>
            <person name="Khouri H."/>
            <person name="Kiss H."/>
            <person name="Kothari S.P."/>
            <person name="Madupu R."/>
            <person name="Nelson K.E."/>
            <person name="Nelson W.C."/>
            <person name="Paulsen I."/>
            <person name="Penn K."/>
            <person name="Ren Q."/>
            <person name="Rosovitz M.J."/>
            <person name="Selengut J.D."/>
            <person name="Shrivastava S."/>
            <person name="Sullivan S.A."/>
            <person name="Tapia R."/>
            <person name="Thompson L.S."/>
            <person name="Watkins K.L."/>
            <person name="Yang Q."/>
            <person name="Yu C."/>
            <person name="Zafar N."/>
            <person name="Zhou L."/>
            <person name="Kuske C.R."/>
        </authorList>
    </citation>
    <scope>NUCLEOTIDE SEQUENCE [LARGE SCALE GENOMIC DNA]</scope>
    <source>
        <strain>ATCC 51196 / DSM 11244 / BCRC 80197 / JCM 7670 / NBRC 15755 / NCIMB 13165 / 161</strain>
    </source>
</reference>
<organism>
    <name type="scientific">Acidobacterium capsulatum (strain ATCC 51196 / DSM 11244 / BCRC 80197 / JCM 7670 / NBRC 15755 / NCIMB 13165 / 161)</name>
    <dbReference type="NCBI Taxonomy" id="240015"/>
    <lineage>
        <taxon>Bacteria</taxon>
        <taxon>Pseudomonadati</taxon>
        <taxon>Acidobacteriota</taxon>
        <taxon>Terriglobia</taxon>
        <taxon>Terriglobales</taxon>
        <taxon>Acidobacteriaceae</taxon>
        <taxon>Acidobacterium</taxon>
    </lineage>
</organism>
<proteinExistence type="inferred from homology"/>
<keyword id="KW-0032">Aminotransferase</keyword>
<keyword id="KW-1185">Reference proteome</keyword>
<keyword id="KW-0808">Transferase</keyword>
<evidence type="ECO:0000255" key="1">
    <source>
        <dbReference type="HAMAP-Rule" id="MF_00259"/>
    </source>
</evidence>
<comment type="function">
    <text evidence="1">The glycine cleavage system catalyzes the degradation of glycine.</text>
</comment>
<comment type="catalytic activity">
    <reaction evidence="1">
        <text>N(6)-[(R)-S(8)-aminomethyldihydrolipoyl]-L-lysyl-[protein] + (6S)-5,6,7,8-tetrahydrofolate = N(6)-[(R)-dihydrolipoyl]-L-lysyl-[protein] + (6R)-5,10-methylene-5,6,7,8-tetrahydrofolate + NH4(+)</text>
        <dbReference type="Rhea" id="RHEA:16945"/>
        <dbReference type="Rhea" id="RHEA-COMP:10475"/>
        <dbReference type="Rhea" id="RHEA-COMP:10492"/>
        <dbReference type="ChEBI" id="CHEBI:15636"/>
        <dbReference type="ChEBI" id="CHEBI:28938"/>
        <dbReference type="ChEBI" id="CHEBI:57453"/>
        <dbReference type="ChEBI" id="CHEBI:83100"/>
        <dbReference type="ChEBI" id="CHEBI:83143"/>
        <dbReference type="EC" id="2.1.2.10"/>
    </reaction>
</comment>
<comment type="subunit">
    <text evidence="1">The glycine cleavage system is composed of four proteins: P, T, L and H.</text>
</comment>
<comment type="similarity">
    <text evidence="1">Belongs to the GcvT family.</text>
</comment>